<sequence>MRVGVLTGGGDCPGLNAVIRAVVRKGIEAHGWEIVGFRSGWRGPLTGDSRPLGLDDVEEILIRGGTILGSSRTNPYKEEGGVEKIRAVLADQGVDALIAIGGEDTLGVAKKLTDDGIGVVGVPKTIDNDLAATDYTFGFDTAVHIATEAIDRLRTTAESHYRAMVVEVMGRHAGWIALHAGLAGGANVILVPERPFSVEQVVEWVERRFEKMYAPIIVVAEGAVPEGGAEVLRTGEKDAFGHVQLGGVGTWLADEIAERTGKESRAVVLGHTQRGGTPTAYDRVLATRFGLHAVDAVADGDFGTMVALRGTDIVRVKLAEATAELKTVPPERYEEAEVFFG</sequence>
<protein>
    <recommendedName>
        <fullName evidence="1">Pyrophosphate--fructose 6-phosphate 1-phosphotransferase</fullName>
        <ecNumber evidence="1">2.7.1.90</ecNumber>
    </recommendedName>
    <alternativeName>
        <fullName evidence="1">6-phosphofructokinase, pyrophosphate dependent</fullName>
    </alternativeName>
    <alternativeName>
        <fullName evidence="1">PPi-dependent phosphofructokinase</fullName>
        <shortName evidence="1">PPi-PFK</shortName>
    </alternativeName>
    <alternativeName>
        <fullName evidence="1">Pyrophosphate-dependent 6-phosphofructose-1-kinase</fullName>
    </alternativeName>
</protein>
<evidence type="ECO:0000255" key="1">
    <source>
        <dbReference type="HAMAP-Rule" id="MF_01976"/>
    </source>
</evidence>
<evidence type="ECO:0000269" key="2">
    <source>
    </source>
</evidence>
<evidence type="ECO:0000269" key="3">
    <source>
    </source>
</evidence>
<evidence type="ECO:0000305" key="4"/>
<gene>
    <name evidence="1" type="primary">pfp</name>
</gene>
<proteinExistence type="evidence at protein level"/>
<feature type="chain" id="PRO_0000112011" description="Pyrophosphate--fructose 6-phosphate 1-phosphotransferase">
    <location>
        <begin position="1"/>
        <end position="341"/>
    </location>
</feature>
<feature type="active site" description="Proton acceptor" evidence="1">
    <location>
        <position position="127"/>
    </location>
</feature>
<feature type="binding site" evidence="1">
    <location>
        <position position="10"/>
    </location>
    <ligand>
        <name>diphosphate</name>
        <dbReference type="ChEBI" id="CHEBI:33019"/>
    </ligand>
</feature>
<feature type="binding site" evidence="1">
    <location>
        <position position="103"/>
    </location>
    <ligand>
        <name>Mg(2+)</name>
        <dbReference type="ChEBI" id="CHEBI:18420"/>
        <note>catalytic</note>
    </ligand>
</feature>
<feature type="binding site" description="in other chain" evidence="1">
    <location>
        <begin position="125"/>
        <end position="127"/>
    </location>
    <ligand>
        <name>substrate</name>
        <note>ligand shared between dimeric partners</note>
    </ligand>
</feature>
<feature type="binding site" evidence="1">
    <location>
        <position position="162"/>
    </location>
    <ligand>
        <name>substrate</name>
        <note>ligand shared between dimeric partners</note>
    </ligand>
</feature>
<feature type="binding site" description="in other chain" evidence="1">
    <location>
        <begin position="169"/>
        <end position="171"/>
    </location>
    <ligand>
        <name>substrate</name>
        <note>ligand shared between dimeric partners</note>
    </ligand>
</feature>
<feature type="binding site" description="in other chain" evidence="1">
    <location>
        <position position="221"/>
    </location>
    <ligand>
        <name>substrate</name>
        <note>ligand shared between dimeric partners</note>
    </ligand>
</feature>
<feature type="binding site" evidence="1">
    <location>
        <position position="265"/>
    </location>
    <ligand>
        <name>substrate</name>
        <note>ligand shared between dimeric partners</note>
    </ligand>
</feature>
<feature type="binding site" description="in other chain" evidence="1">
    <location>
        <begin position="271"/>
        <end position="274"/>
    </location>
    <ligand>
        <name>substrate</name>
        <note>ligand shared between dimeric partners</note>
    </ligand>
</feature>
<feature type="site" description="Important for catalytic activity and substrate specificity; stabilizes the transition state when the phosphoryl donor is PPi; prevents ATP from binding by mimicking the alpha-phosphate group of ATP" evidence="1">
    <location>
        <position position="104"/>
    </location>
</feature>
<feature type="site" description="Important for catalytic activity; stabilizes the transition state when the phosphoryl donor is PPi" evidence="1">
    <location>
        <position position="124"/>
    </location>
</feature>
<comment type="function">
    <text evidence="1 2 3">Catalyzes the phosphorylation of D-fructose 6-phosphate, the first committing step of glycolysis. Uses inorganic phosphate (PPi) as phosphoryl donor instead of ATP like common ATP-dependent phosphofructokinases (ATP-PFKs), which renders the reaction reversible, and can thus function both in glycolysis and gluconeogenesis. Consistently, PPi-PFK can replace the enzymes of both the forward (ATP-PFK) and reverse (fructose-bisphosphatase (FBPase)) reactions.</text>
</comment>
<comment type="catalytic activity">
    <reaction evidence="1 3">
        <text>beta-D-fructose 6-phosphate + diphosphate = beta-D-fructose 1,6-bisphosphate + phosphate + H(+)</text>
        <dbReference type="Rhea" id="RHEA:13613"/>
        <dbReference type="ChEBI" id="CHEBI:15378"/>
        <dbReference type="ChEBI" id="CHEBI:32966"/>
        <dbReference type="ChEBI" id="CHEBI:33019"/>
        <dbReference type="ChEBI" id="CHEBI:43474"/>
        <dbReference type="ChEBI" id="CHEBI:57634"/>
        <dbReference type="EC" id="2.7.1.90"/>
    </reaction>
</comment>
<comment type="cofactor">
    <cofactor evidence="1">
        <name>Mg(2+)</name>
        <dbReference type="ChEBI" id="CHEBI:18420"/>
    </cofactor>
</comment>
<comment type="activity regulation">
    <text evidence="1 3">Non-allosteric.</text>
</comment>
<comment type="biophysicochemical properties">
    <kinetics>
        <KM evidence="3">0.84 mM for phosphate</KM>
        <KM evidence="3">0.2 mM for diphosphate</KM>
        <KM evidence="3">0.4 mM for fructose 6-phosphate</KM>
        <KM evidence="3">0.025 mM for fructose 1,6-bisphosphate</KM>
        <Vmax evidence="3">58.0 umol/min/mg enzyme for the forward reaction</Vmax>
        <Vmax evidence="3">59.0 umol/min/mg enzyme for the reverse reaction</Vmax>
    </kinetics>
    <phDependence>
        <text evidence="3">Optimum pH is 7.5 for both the forward and the reverse reactions.</text>
    </phDependence>
    <temperatureDependence>
        <text evidence="3">Optimum temperature is 35-46 degrees Celsius.</text>
    </temperatureDependence>
</comment>
<comment type="pathway">
    <text evidence="1">Carbohydrate degradation; glycolysis; D-glyceraldehyde 3-phosphate and glycerone phosphate from D-glucose: step 3/4.</text>
</comment>
<comment type="subunit">
    <text evidence="3">Homotetramer.</text>
</comment>
<comment type="subcellular location">
    <subcellularLocation>
        <location evidence="1">Cytoplasm</location>
    </subcellularLocation>
</comment>
<comment type="induction">
    <text evidence="2">Present when grown on glucose.</text>
</comment>
<comment type="similarity">
    <text evidence="1">Belongs to the phosphofructokinase type A (PFKA) family. Mixed-substrate PFK group III subfamily.</text>
</comment>
<comment type="sequence caution" evidence="4">
    <conflict type="erroneous initiation">
        <sequence resource="EMBL-CDS" id="AAB01683"/>
    </conflict>
</comment>
<keyword id="KW-0963">Cytoplasm</keyword>
<keyword id="KW-0903">Direct protein sequencing</keyword>
<keyword id="KW-0324">Glycolysis</keyword>
<keyword id="KW-0418">Kinase</keyword>
<keyword id="KW-0460">Magnesium</keyword>
<keyword id="KW-0479">Metal-binding</keyword>
<keyword id="KW-0808">Transferase</keyword>
<reference key="1">
    <citation type="journal article" date="1996" name="J. Bacteriol.">
        <title>Characterization and phylogeny of the pfp gene of Amycolatopsis methanolica encoding PPi-dependent phosphofructokinase.</title>
        <authorList>
            <person name="Alves A.M."/>
            <person name="Meijer W.G."/>
            <person name="Vrijbloed J.W."/>
            <person name="Dijkhuizen L."/>
        </authorList>
    </citation>
    <scope>NUCLEOTIDE SEQUENCE [GENOMIC DNA]</scope>
    <source>
        <strain>DSM 44096 / JCM 8087 / NBRC 15065 / NCIMB 11946 / NRRL B-24139 / LMD 80.32 / 239</strain>
    </source>
</reference>
<reference key="2">
    <citation type="journal article" date="1994" name="J. Bacteriol.">
        <title>Enzymes of glucose and methanol metabolism in the actinomycete Amycolatopsis methanolica.</title>
        <authorList>
            <person name="Alves A.M."/>
            <person name="Euverink G.J."/>
            <person name="Hektor H.J."/>
            <person name="Hessels G.I."/>
            <person name="van der Vlag J."/>
            <person name="Vrijbloed J.W."/>
            <person name="Hondmann D."/>
            <person name="Visser J."/>
            <person name="Dijkhuizen L."/>
        </authorList>
    </citation>
    <scope>PROTEIN SEQUENCE OF 1-40</scope>
    <scope>FUNCTION</scope>
    <scope>CATALYTIC ACTIVITY</scope>
    <scope>SUBUNIT</scope>
    <scope>BIOPHYSICOCHEMICAL PROPERTIES</scope>
    <scope>ACTIVITY REGULATION</scope>
    <source>
        <strain>DSM 44096 / JCM 8087 / NBRC 15065 / NCIMB 11946 / NRRL B-24139 / LMD 80.32 / 239</strain>
    </source>
</reference>
<reference key="3">
    <citation type="journal article" date="2001" name="J. Bacteriol.">
        <title>Different physiological roles of ATP- and PP(i)-dependent phosphofructokinase isoenzymes in the methylotrophic actinomycete Amycolatopsis methanolica.</title>
        <authorList>
            <person name="Alves A.M."/>
            <person name="Euverink G.J."/>
            <person name="Santos H."/>
            <person name="Dijkhuizen L."/>
        </authorList>
    </citation>
    <scope>FUNCTION</scope>
    <scope>INDUCTION</scope>
    <source>
        <strain>DSM 44096 / JCM 8087 / NBRC 15065 / NCIMB 11946 / NRRL B-24139 / LMD 80.32 / 239</strain>
    </source>
</reference>
<organism>
    <name type="scientific">Amycolatopsis methanolica</name>
    <dbReference type="NCBI Taxonomy" id="1814"/>
    <lineage>
        <taxon>Bacteria</taxon>
        <taxon>Bacillati</taxon>
        <taxon>Actinomycetota</taxon>
        <taxon>Actinomycetes</taxon>
        <taxon>Pseudonocardiales</taxon>
        <taxon>Pseudonocardiaceae</taxon>
        <taxon>Amycolatopsis</taxon>
        <taxon>Amycolatopsis methanolica group</taxon>
    </lineage>
</organism>
<dbReference type="EC" id="2.7.1.90" evidence="1"/>
<dbReference type="EMBL" id="U31277">
    <property type="protein sequence ID" value="AAB01683.1"/>
    <property type="status" value="ALT_INIT"/>
    <property type="molecule type" value="Genomic_DNA"/>
</dbReference>
<dbReference type="RefSeq" id="WP_017983825.1">
    <property type="nucleotide sequence ID" value="NZ_JBFATH010000009.1"/>
</dbReference>
<dbReference type="SMR" id="Q59126"/>
<dbReference type="BRENDA" id="2.7.1.90">
    <property type="organism ID" value="314"/>
</dbReference>
<dbReference type="SABIO-RK" id="Q59126"/>
<dbReference type="UniPathway" id="UPA00109">
    <property type="reaction ID" value="UER00182"/>
</dbReference>
<dbReference type="GO" id="GO:0005945">
    <property type="term" value="C:6-phosphofructokinase complex"/>
    <property type="evidence" value="ECO:0007669"/>
    <property type="project" value="TreeGrafter"/>
</dbReference>
<dbReference type="GO" id="GO:0003872">
    <property type="term" value="F:6-phosphofructokinase activity"/>
    <property type="evidence" value="ECO:0007669"/>
    <property type="project" value="UniProtKB-UniRule"/>
</dbReference>
<dbReference type="GO" id="GO:0016208">
    <property type="term" value="F:AMP binding"/>
    <property type="evidence" value="ECO:0007669"/>
    <property type="project" value="TreeGrafter"/>
</dbReference>
<dbReference type="GO" id="GO:0005524">
    <property type="term" value="F:ATP binding"/>
    <property type="evidence" value="ECO:0007669"/>
    <property type="project" value="InterPro"/>
</dbReference>
<dbReference type="GO" id="GO:0047334">
    <property type="term" value="F:diphosphate-fructose-6-phosphate 1-phosphotransferase activity"/>
    <property type="evidence" value="ECO:0007669"/>
    <property type="project" value="UniProtKB-EC"/>
</dbReference>
<dbReference type="GO" id="GO:0070095">
    <property type="term" value="F:fructose-6-phosphate binding"/>
    <property type="evidence" value="ECO:0007669"/>
    <property type="project" value="TreeGrafter"/>
</dbReference>
<dbReference type="GO" id="GO:0042802">
    <property type="term" value="F:identical protein binding"/>
    <property type="evidence" value="ECO:0007669"/>
    <property type="project" value="TreeGrafter"/>
</dbReference>
<dbReference type="GO" id="GO:0046872">
    <property type="term" value="F:metal ion binding"/>
    <property type="evidence" value="ECO:0007669"/>
    <property type="project" value="UniProtKB-KW"/>
</dbReference>
<dbReference type="GO" id="GO:0048029">
    <property type="term" value="F:monosaccharide binding"/>
    <property type="evidence" value="ECO:0007669"/>
    <property type="project" value="TreeGrafter"/>
</dbReference>
<dbReference type="GO" id="GO:0061621">
    <property type="term" value="P:canonical glycolysis"/>
    <property type="evidence" value="ECO:0007669"/>
    <property type="project" value="TreeGrafter"/>
</dbReference>
<dbReference type="GO" id="GO:0030388">
    <property type="term" value="P:fructose 1,6-bisphosphate metabolic process"/>
    <property type="evidence" value="ECO:0007669"/>
    <property type="project" value="TreeGrafter"/>
</dbReference>
<dbReference type="GO" id="GO:0006002">
    <property type="term" value="P:fructose 6-phosphate metabolic process"/>
    <property type="evidence" value="ECO:0007669"/>
    <property type="project" value="InterPro"/>
</dbReference>
<dbReference type="FunFam" id="3.40.50.460:FF:000002">
    <property type="entry name" value="ATP-dependent 6-phosphofructokinase"/>
    <property type="match status" value="1"/>
</dbReference>
<dbReference type="Gene3D" id="3.40.50.450">
    <property type="match status" value="1"/>
</dbReference>
<dbReference type="Gene3D" id="3.40.50.460">
    <property type="entry name" value="Phosphofructokinase domain"/>
    <property type="match status" value="1"/>
</dbReference>
<dbReference type="HAMAP" id="MF_01976">
    <property type="entry name" value="Phosphofructokinase_III"/>
    <property type="match status" value="1"/>
</dbReference>
<dbReference type="InterPro" id="IPR022953">
    <property type="entry name" value="ATP_PFK"/>
</dbReference>
<dbReference type="InterPro" id="IPR012003">
    <property type="entry name" value="ATP_PFK_prok-type"/>
</dbReference>
<dbReference type="InterPro" id="IPR015912">
    <property type="entry name" value="Phosphofructokinase_CS"/>
</dbReference>
<dbReference type="InterPro" id="IPR000023">
    <property type="entry name" value="Phosphofructokinase_dom"/>
</dbReference>
<dbReference type="InterPro" id="IPR012829">
    <property type="entry name" value="Phosphofructokinase_III"/>
</dbReference>
<dbReference type="InterPro" id="IPR035966">
    <property type="entry name" value="PKF_sf"/>
</dbReference>
<dbReference type="NCBIfam" id="TIGR02483">
    <property type="entry name" value="PFK_mixed"/>
    <property type="match status" value="1"/>
</dbReference>
<dbReference type="NCBIfam" id="NF002872">
    <property type="entry name" value="PRK03202.1"/>
    <property type="match status" value="1"/>
</dbReference>
<dbReference type="PANTHER" id="PTHR13697:SF52">
    <property type="entry name" value="ATP-DEPENDENT 6-PHOSPHOFRUCTOKINASE 3"/>
    <property type="match status" value="1"/>
</dbReference>
<dbReference type="PANTHER" id="PTHR13697">
    <property type="entry name" value="PHOSPHOFRUCTOKINASE"/>
    <property type="match status" value="1"/>
</dbReference>
<dbReference type="Pfam" id="PF00365">
    <property type="entry name" value="PFK"/>
    <property type="match status" value="1"/>
</dbReference>
<dbReference type="PIRSF" id="PIRSF000532">
    <property type="entry name" value="ATP_PFK_prok"/>
    <property type="match status" value="1"/>
</dbReference>
<dbReference type="PRINTS" id="PR00476">
    <property type="entry name" value="PHFRCTKINASE"/>
</dbReference>
<dbReference type="SUPFAM" id="SSF53784">
    <property type="entry name" value="Phosphofructokinase"/>
    <property type="match status" value="1"/>
</dbReference>
<dbReference type="PROSITE" id="PS00433">
    <property type="entry name" value="PHOSPHOFRUCTOKINASE"/>
    <property type="match status" value="1"/>
</dbReference>
<name>PFP_AMYME</name>
<accession>Q59126</accession>